<sequence>MTAQNIDGTLISQTVRSEVAARVKARVQAGLRAPGLAVVLVGEDPASQVYVGSKRRACEEVGFVSKSFDLPATASEEALLSLVEELNNDPQIDGILVQLPLPAGMDTTKVLESIHPEKDVDGFHPYNVGRLAQRIPKLRSCTPKGIITLLERYNIPLRGKHAVIVGASNIVGRPMTLELLLAGCTTTTCHRFTQDLEGHIRQADILVVAVGKPNFIPGAWIKEGAVVVDVGINRLDTGKLVGDVEYDVARTRASFITPVPGGVGPMTVASLIENTMMACEQFHTQG</sequence>
<protein>
    <recommendedName>
        <fullName evidence="1">Bifunctional protein FolD</fullName>
    </recommendedName>
    <domain>
        <recommendedName>
            <fullName evidence="1">Methylenetetrahydrofolate dehydrogenase</fullName>
            <ecNumber evidence="1">1.5.1.5</ecNumber>
        </recommendedName>
    </domain>
    <domain>
        <recommendedName>
            <fullName evidence="1">Methenyltetrahydrofolate cyclohydrolase</fullName>
            <ecNumber evidence="1">3.5.4.9</ecNumber>
        </recommendedName>
    </domain>
</protein>
<feature type="chain" id="PRO_0000340602" description="Bifunctional protein FolD">
    <location>
        <begin position="1"/>
        <end position="286"/>
    </location>
</feature>
<feature type="binding site" evidence="1">
    <location>
        <begin position="166"/>
        <end position="168"/>
    </location>
    <ligand>
        <name>NADP(+)</name>
        <dbReference type="ChEBI" id="CHEBI:58349"/>
    </ligand>
</feature>
<feature type="binding site" evidence="1">
    <location>
        <position position="232"/>
    </location>
    <ligand>
        <name>NADP(+)</name>
        <dbReference type="ChEBI" id="CHEBI:58349"/>
    </ligand>
</feature>
<proteinExistence type="inferred from homology"/>
<evidence type="ECO:0000255" key="1">
    <source>
        <dbReference type="HAMAP-Rule" id="MF_01576"/>
    </source>
</evidence>
<evidence type="ECO:0000305" key="2"/>
<comment type="function">
    <text evidence="1">Catalyzes the oxidation of 5,10-methylenetetrahydrofolate to 5,10-methenyltetrahydrofolate and then the hydrolysis of 5,10-methenyltetrahydrofolate to 10-formyltetrahydrofolate.</text>
</comment>
<comment type="catalytic activity">
    <reaction evidence="1">
        <text>(6R)-5,10-methylene-5,6,7,8-tetrahydrofolate + NADP(+) = (6R)-5,10-methenyltetrahydrofolate + NADPH</text>
        <dbReference type="Rhea" id="RHEA:22812"/>
        <dbReference type="ChEBI" id="CHEBI:15636"/>
        <dbReference type="ChEBI" id="CHEBI:57455"/>
        <dbReference type="ChEBI" id="CHEBI:57783"/>
        <dbReference type="ChEBI" id="CHEBI:58349"/>
        <dbReference type="EC" id="1.5.1.5"/>
    </reaction>
</comment>
<comment type="catalytic activity">
    <reaction evidence="1">
        <text>(6R)-5,10-methenyltetrahydrofolate + H2O = (6R)-10-formyltetrahydrofolate + H(+)</text>
        <dbReference type="Rhea" id="RHEA:23700"/>
        <dbReference type="ChEBI" id="CHEBI:15377"/>
        <dbReference type="ChEBI" id="CHEBI:15378"/>
        <dbReference type="ChEBI" id="CHEBI:57455"/>
        <dbReference type="ChEBI" id="CHEBI:195366"/>
        <dbReference type="EC" id="3.5.4.9"/>
    </reaction>
</comment>
<comment type="pathway">
    <text evidence="1">One-carbon metabolism; tetrahydrofolate interconversion.</text>
</comment>
<comment type="subunit">
    <text evidence="1">Homodimer.</text>
</comment>
<comment type="similarity">
    <text evidence="1">Belongs to the tetrahydrofolate dehydrogenase/cyclohydrolase family.</text>
</comment>
<comment type="sequence caution" evidence="2">
    <conflict type="erroneous initiation">
        <sequence resource="EMBL-CDS" id="ABQ19635"/>
    </conflict>
</comment>
<comment type="sequence caution" evidence="2">
    <conflict type="erroneous initiation">
        <sequence resource="EMBL-CDS" id="ACP10050"/>
    </conflict>
</comment>
<reference key="1">
    <citation type="submission" date="2007-03" db="EMBL/GenBank/DDBJ databases">
        <authorList>
            <person name="Heidelberg J."/>
        </authorList>
    </citation>
    <scope>NUCLEOTIDE SEQUENCE [LARGE SCALE GENOMIC DNA]</scope>
    <source>
        <strain>ATCC 39541 / Classical Ogawa 395 / O395</strain>
    </source>
</reference>
<reference key="2">
    <citation type="journal article" date="2008" name="PLoS ONE">
        <title>A recalibrated molecular clock and independent origins for the cholera pandemic clones.</title>
        <authorList>
            <person name="Feng L."/>
            <person name="Reeves P.R."/>
            <person name="Lan R."/>
            <person name="Ren Y."/>
            <person name="Gao C."/>
            <person name="Zhou Z."/>
            <person name="Ren Y."/>
            <person name="Cheng J."/>
            <person name="Wang W."/>
            <person name="Wang J."/>
            <person name="Qian W."/>
            <person name="Li D."/>
            <person name="Wang L."/>
        </authorList>
    </citation>
    <scope>NUCLEOTIDE SEQUENCE [LARGE SCALE GENOMIC DNA]</scope>
    <source>
        <strain>ATCC 39541 / Classical Ogawa 395 / O395</strain>
    </source>
</reference>
<dbReference type="EC" id="1.5.1.5" evidence="1"/>
<dbReference type="EC" id="3.5.4.9" evidence="1"/>
<dbReference type="EMBL" id="CP000627">
    <property type="protein sequence ID" value="ABQ19635.1"/>
    <property type="status" value="ALT_INIT"/>
    <property type="molecule type" value="Genomic_DNA"/>
</dbReference>
<dbReference type="EMBL" id="CP001235">
    <property type="protein sequence ID" value="ACP10050.1"/>
    <property type="status" value="ALT_INIT"/>
    <property type="molecule type" value="Genomic_DNA"/>
</dbReference>
<dbReference type="RefSeq" id="WP_000126770.1">
    <property type="nucleotide sequence ID" value="NZ_JAACZH010000001.1"/>
</dbReference>
<dbReference type="SMR" id="A5F6V4"/>
<dbReference type="GeneID" id="89514780"/>
<dbReference type="KEGG" id="vco:VC0395_A1533"/>
<dbReference type="KEGG" id="vcr:VC395_2057"/>
<dbReference type="PATRIC" id="fig|345073.21.peg.1990"/>
<dbReference type="eggNOG" id="COG0190">
    <property type="taxonomic scope" value="Bacteria"/>
</dbReference>
<dbReference type="HOGENOM" id="CLU_034045_2_1_6"/>
<dbReference type="UniPathway" id="UPA00193"/>
<dbReference type="Proteomes" id="UP000000249">
    <property type="component" value="Chromosome 2"/>
</dbReference>
<dbReference type="GO" id="GO:0005829">
    <property type="term" value="C:cytosol"/>
    <property type="evidence" value="ECO:0007669"/>
    <property type="project" value="TreeGrafter"/>
</dbReference>
<dbReference type="GO" id="GO:0004477">
    <property type="term" value="F:methenyltetrahydrofolate cyclohydrolase activity"/>
    <property type="evidence" value="ECO:0007669"/>
    <property type="project" value="UniProtKB-UniRule"/>
</dbReference>
<dbReference type="GO" id="GO:0004488">
    <property type="term" value="F:methylenetetrahydrofolate dehydrogenase (NADP+) activity"/>
    <property type="evidence" value="ECO:0007669"/>
    <property type="project" value="UniProtKB-UniRule"/>
</dbReference>
<dbReference type="GO" id="GO:0000105">
    <property type="term" value="P:L-histidine biosynthetic process"/>
    <property type="evidence" value="ECO:0007669"/>
    <property type="project" value="UniProtKB-KW"/>
</dbReference>
<dbReference type="GO" id="GO:0009086">
    <property type="term" value="P:methionine biosynthetic process"/>
    <property type="evidence" value="ECO:0007669"/>
    <property type="project" value="UniProtKB-KW"/>
</dbReference>
<dbReference type="GO" id="GO:0006164">
    <property type="term" value="P:purine nucleotide biosynthetic process"/>
    <property type="evidence" value="ECO:0007669"/>
    <property type="project" value="UniProtKB-KW"/>
</dbReference>
<dbReference type="GO" id="GO:0035999">
    <property type="term" value="P:tetrahydrofolate interconversion"/>
    <property type="evidence" value="ECO:0007669"/>
    <property type="project" value="UniProtKB-UniRule"/>
</dbReference>
<dbReference type="CDD" id="cd01080">
    <property type="entry name" value="NAD_bind_m-THF_DH_Cyclohyd"/>
    <property type="match status" value="1"/>
</dbReference>
<dbReference type="FunFam" id="3.40.50.10860:FF:000001">
    <property type="entry name" value="Bifunctional protein FolD"/>
    <property type="match status" value="1"/>
</dbReference>
<dbReference type="FunFam" id="3.40.50.720:FF:000006">
    <property type="entry name" value="Bifunctional protein FolD"/>
    <property type="match status" value="1"/>
</dbReference>
<dbReference type="Gene3D" id="3.40.50.10860">
    <property type="entry name" value="Leucine Dehydrogenase, chain A, domain 1"/>
    <property type="match status" value="1"/>
</dbReference>
<dbReference type="Gene3D" id="3.40.50.720">
    <property type="entry name" value="NAD(P)-binding Rossmann-like Domain"/>
    <property type="match status" value="1"/>
</dbReference>
<dbReference type="HAMAP" id="MF_01576">
    <property type="entry name" value="THF_DHG_CYH"/>
    <property type="match status" value="1"/>
</dbReference>
<dbReference type="InterPro" id="IPR046346">
    <property type="entry name" value="Aminoacid_DH-like_N_sf"/>
</dbReference>
<dbReference type="InterPro" id="IPR036291">
    <property type="entry name" value="NAD(P)-bd_dom_sf"/>
</dbReference>
<dbReference type="InterPro" id="IPR000672">
    <property type="entry name" value="THF_DH/CycHdrlase"/>
</dbReference>
<dbReference type="InterPro" id="IPR020630">
    <property type="entry name" value="THF_DH/CycHdrlase_cat_dom"/>
</dbReference>
<dbReference type="InterPro" id="IPR020867">
    <property type="entry name" value="THF_DH/CycHdrlase_CS"/>
</dbReference>
<dbReference type="InterPro" id="IPR020631">
    <property type="entry name" value="THF_DH/CycHdrlase_NAD-bd_dom"/>
</dbReference>
<dbReference type="NCBIfam" id="NF008058">
    <property type="entry name" value="PRK10792.1"/>
    <property type="match status" value="1"/>
</dbReference>
<dbReference type="NCBIfam" id="NF010783">
    <property type="entry name" value="PRK14186.1"/>
    <property type="match status" value="1"/>
</dbReference>
<dbReference type="PANTHER" id="PTHR48099:SF5">
    <property type="entry name" value="C-1-TETRAHYDROFOLATE SYNTHASE, CYTOPLASMIC"/>
    <property type="match status" value="1"/>
</dbReference>
<dbReference type="PANTHER" id="PTHR48099">
    <property type="entry name" value="C-1-TETRAHYDROFOLATE SYNTHASE, CYTOPLASMIC-RELATED"/>
    <property type="match status" value="1"/>
</dbReference>
<dbReference type="Pfam" id="PF00763">
    <property type="entry name" value="THF_DHG_CYH"/>
    <property type="match status" value="1"/>
</dbReference>
<dbReference type="Pfam" id="PF02882">
    <property type="entry name" value="THF_DHG_CYH_C"/>
    <property type="match status" value="1"/>
</dbReference>
<dbReference type="PRINTS" id="PR00085">
    <property type="entry name" value="THFDHDRGNASE"/>
</dbReference>
<dbReference type="SUPFAM" id="SSF53223">
    <property type="entry name" value="Aminoacid dehydrogenase-like, N-terminal domain"/>
    <property type="match status" value="1"/>
</dbReference>
<dbReference type="SUPFAM" id="SSF51735">
    <property type="entry name" value="NAD(P)-binding Rossmann-fold domains"/>
    <property type="match status" value="1"/>
</dbReference>
<dbReference type="PROSITE" id="PS00767">
    <property type="entry name" value="THF_DHG_CYH_2"/>
    <property type="match status" value="1"/>
</dbReference>
<gene>
    <name evidence="1" type="primary">folD</name>
    <name type="ordered locus">VC0395_A1533</name>
    <name type="ordered locus">VC395_2057</name>
</gene>
<keyword id="KW-0028">Amino-acid biosynthesis</keyword>
<keyword id="KW-0368">Histidine biosynthesis</keyword>
<keyword id="KW-0378">Hydrolase</keyword>
<keyword id="KW-0486">Methionine biosynthesis</keyword>
<keyword id="KW-0511">Multifunctional enzyme</keyword>
<keyword id="KW-0521">NADP</keyword>
<keyword id="KW-0554">One-carbon metabolism</keyword>
<keyword id="KW-0560">Oxidoreductase</keyword>
<keyword id="KW-0658">Purine biosynthesis</keyword>
<accession>A5F6V4</accession>
<accession>C3M1Z5</accession>
<name>FOLD_VIBC3</name>
<organism>
    <name type="scientific">Vibrio cholerae serotype O1 (strain ATCC 39541 / Classical Ogawa 395 / O395)</name>
    <dbReference type="NCBI Taxonomy" id="345073"/>
    <lineage>
        <taxon>Bacteria</taxon>
        <taxon>Pseudomonadati</taxon>
        <taxon>Pseudomonadota</taxon>
        <taxon>Gammaproteobacteria</taxon>
        <taxon>Vibrionales</taxon>
        <taxon>Vibrionaceae</taxon>
        <taxon>Vibrio</taxon>
    </lineage>
</organism>